<sequence>MAAMSEDSCVNFKEMMFIDNTLYFIPEENGDLESDNFGRLHCTTAVIRNINDQVLFVDKRQPVFEDMTDIDQSASEPQTRLIIYMYKDSEVRGLAVTLSVKDSKMSTLSCKNKIISFEEMDPPENIDDIQSDLIFFQKRVPGHNKMEFESSLYEGHFLACQKEDDAFKLILKKKDENGDKSVMFTLTNLHQS</sequence>
<feature type="propeptide" id="PRO_0000015345" evidence="7">
    <location>
        <begin position="1"/>
        <end position="35"/>
    </location>
</feature>
<feature type="chain" id="PRO_0000015346" description="Interleukin-18">
    <location>
        <begin position="36"/>
        <end position="192"/>
    </location>
</feature>
<feature type="site" description="Cleavage; by CASP1" evidence="1">
    <location>
        <begin position="35"/>
        <end position="36"/>
    </location>
</feature>
<feature type="site" description="Cleavage; by CASP3" evidence="1">
    <location>
        <begin position="69"/>
        <end position="70"/>
    </location>
</feature>
<feature type="mutagenesis site" description="Humanized protein that is efficiently cleaved by Casp4/Casp11; when associated with 36-Y--E-41." evidence="5">
    <original>ENGD</original>
    <variation>DDEN</variation>
    <location>
        <begin position="28"/>
        <end position="31"/>
    </location>
</feature>
<feature type="mutagenesis site" description="Humanized protein that is efficiently cleaved by Casp4/Casp11; when associated with 28-D--N-41." evidence="5">
    <original>NFGRLH</original>
    <variation>YFGRLE</variation>
    <location>
        <begin position="36"/>
        <end position="41"/>
    </location>
</feature>
<feature type="sequence conflict" description="In Ref. 3; AAB49753." evidence="8" ref="3">
    <original>MFT</original>
    <variation>IS</variation>
    <location>
        <begin position="183"/>
        <end position="185"/>
    </location>
</feature>
<gene>
    <name evidence="9" type="primary">Il18</name>
    <name type="synonym">Igif</name>
</gene>
<dbReference type="EMBL" id="D49949">
    <property type="protein sequence ID" value="BAA08705.1"/>
    <property type="molecule type" value="mRNA"/>
</dbReference>
<dbReference type="EMBL" id="BC024384">
    <property type="protein sequence ID" value="AAH24384.1"/>
    <property type="molecule type" value="mRNA"/>
</dbReference>
<dbReference type="EMBL" id="U66244">
    <property type="protein sequence ID" value="AAB49753.1"/>
    <property type="molecule type" value="mRNA"/>
</dbReference>
<dbReference type="CCDS" id="CCDS40622.1"/>
<dbReference type="PIR" id="S60226">
    <property type="entry name" value="S60226"/>
</dbReference>
<dbReference type="RefSeq" id="NP_001344150.1">
    <property type="nucleotide sequence ID" value="NM_001357221.1"/>
</dbReference>
<dbReference type="RefSeq" id="NP_032386.1">
    <property type="nucleotide sequence ID" value="NM_008360.2"/>
</dbReference>
<dbReference type="RefSeq" id="XP_006510089.1">
    <property type="nucleotide sequence ID" value="XM_006510026.1"/>
</dbReference>
<dbReference type="RefSeq" id="XP_006510090.1">
    <property type="nucleotide sequence ID" value="XM_006510027.3"/>
</dbReference>
<dbReference type="RefSeq" id="XP_006510091.1">
    <property type="nucleotide sequence ID" value="XM_006510028.3"/>
</dbReference>
<dbReference type="RefSeq" id="XP_036010510.1">
    <property type="nucleotide sequence ID" value="XM_036154617.1"/>
</dbReference>
<dbReference type="SMR" id="P70380"/>
<dbReference type="DIP" id="DIP-950N"/>
<dbReference type="FunCoup" id="P70380">
    <property type="interactions" value="331"/>
</dbReference>
<dbReference type="STRING" id="10090.ENSMUSP00000151002"/>
<dbReference type="PhosphoSitePlus" id="P70380"/>
<dbReference type="PaxDb" id="10090-ENSMUSP00000054591"/>
<dbReference type="ProteomicsDB" id="266967"/>
<dbReference type="Pumba" id="P70380"/>
<dbReference type="ABCD" id="P70380">
    <property type="antibodies" value="1 sequenced antibody"/>
</dbReference>
<dbReference type="Antibodypedia" id="1287">
    <property type="antibodies" value="1001 antibodies from 48 providers"/>
</dbReference>
<dbReference type="DNASU" id="16173"/>
<dbReference type="Ensembl" id="ENSMUST00000180021.2">
    <property type="protein sequence ID" value="ENSMUSP00000137193.2"/>
    <property type="gene ID" value="ENSMUSG00000039217.14"/>
</dbReference>
<dbReference type="Ensembl" id="ENSMUST00000214117.2">
    <property type="protein sequence ID" value="ENSMUSP00000151002.2"/>
    <property type="gene ID" value="ENSMUSG00000039217.14"/>
</dbReference>
<dbReference type="GeneID" id="16173"/>
<dbReference type="KEGG" id="mmu:16173"/>
<dbReference type="UCSC" id="uc009pju.1">
    <property type="organism name" value="mouse"/>
</dbReference>
<dbReference type="AGR" id="MGI:107936"/>
<dbReference type="CTD" id="3606"/>
<dbReference type="MGI" id="MGI:107936">
    <property type="gene designation" value="Il18"/>
</dbReference>
<dbReference type="VEuPathDB" id="HostDB:ENSMUSG00000039217"/>
<dbReference type="eggNOG" id="ENOG502SDJZ">
    <property type="taxonomic scope" value="Eukaryota"/>
</dbReference>
<dbReference type="GeneTree" id="ENSGT00390000001053"/>
<dbReference type="HOGENOM" id="CLU_113349_0_0_1"/>
<dbReference type="InParanoid" id="P70380"/>
<dbReference type="OMA" id="RQFYKFE"/>
<dbReference type="OrthoDB" id="8535973at2759"/>
<dbReference type="PhylomeDB" id="P70380"/>
<dbReference type="Reactome" id="R-MMU-448706">
    <property type="pathway name" value="Interleukin-1 processing"/>
</dbReference>
<dbReference type="Reactome" id="R-MMU-5620971">
    <property type="pathway name" value="Pyroptosis"/>
</dbReference>
<dbReference type="Reactome" id="R-MMU-9012546">
    <property type="pathway name" value="Interleukin-18 signaling"/>
</dbReference>
<dbReference type="BioGRID-ORCS" id="16173">
    <property type="hits" value="0 hits in 79 CRISPR screens"/>
</dbReference>
<dbReference type="ChiTaRS" id="Il18">
    <property type="organism name" value="mouse"/>
</dbReference>
<dbReference type="PRO" id="PR:P70380"/>
<dbReference type="Proteomes" id="UP000000589">
    <property type="component" value="Chromosome 9"/>
</dbReference>
<dbReference type="RNAct" id="P70380">
    <property type="molecule type" value="protein"/>
</dbReference>
<dbReference type="Bgee" id="ENSMUSG00000039217">
    <property type="expression patterns" value="Expressed in epithelium of stomach and 223 other cell types or tissues"/>
</dbReference>
<dbReference type="ExpressionAtlas" id="P70380">
    <property type="expression patterns" value="baseline and differential"/>
</dbReference>
<dbReference type="GO" id="GO:0005737">
    <property type="term" value="C:cytoplasm"/>
    <property type="evidence" value="ECO:0007669"/>
    <property type="project" value="UniProtKB-SubCell"/>
</dbReference>
<dbReference type="GO" id="GO:0005615">
    <property type="term" value="C:extracellular space"/>
    <property type="evidence" value="ECO:0000314"/>
    <property type="project" value="UniProtKB"/>
</dbReference>
<dbReference type="GO" id="GO:0005125">
    <property type="term" value="F:cytokine activity"/>
    <property type="evidence" value="ECO:0000314"/>
    <property type="project" value="MGI"/>
</dbReference>
<dbReference type="GO" id="GO:0045515">
    <property type="term" value="F:interleukin-18 receptor binding"/>
    <property type="evidence" value="ECO:0000250"/>
    <property type="project" value="UniProtKB"/>
</dbReference>
<dbReference type="GO" id="GO:0048018">
    <property type="term" value="F:receptor ligand activity"/>
    <property type="evidence" value="ECO:0000314"/>
    <property type="project" value="MGI"/>
</dbReference>
<dbReference type="GO" id="GO:0001525">
    <property type="term" value="P:angiogenesis"/>
    <property type="evidence" value="ECO:0000250"/>
    <property type="project" value="UniProtKB"/>
</dbReference>
<dbReference type="GO" id="GO:0008283">
    <property type="term" value="P:cell population proliferation"/>
    <property type="evidence" value="ECO:0000314"/>
    <property type="project" value="MGI"/>
</dbReference>
<dbReference type="GO" id="GO:0042632">
    <property type="term" value="P:cholesterol homeostasis"/>
    <property type="evidence" value="ECO:0000315"/>
    <property type="project" value="BHF-UCL"/>
</dbReference>
<dbReference type="GO" id="GO:0050830">
    <property type="term" value="P:defense response to Gram-positive bacterium"/>
    <property type="evidence" value="ECO:0000314"/>
    <property type="project" value="UniProtKB"/>
</dbReference>
<dbReference type="GO" id="GO:0061436">
    <property type="term" value="P:establishment of skin barrier"/>
    <property type="evidence" value="ECO:0000315"/>
    <property type="project" value="UniProtKB"/>
</dbReference>
<dbReference type="GO" id="GO:0008625">
    <property type="term" value="P:extrinsic apoptotic signaling pathway via death domain receptors"/>
    <property type="evidence" value="ECO:0000304"/>
    <property type="project" value="UniProtKB"/>
</dbReference>
<dbReference type="GO" id="GO:0006955">
    <property type="term" value="P:immune response"/>
    <property type="evidence" value="ECO:0000304"/>
    <property type="project" value="MGI"/>
</dbReference>
<dbReference type="GO" id="GO:0006954">
    <property type="term" value="P:inflammatory response"/>
    <property type="evidence" value="ECO:0000316"/>
    <property type="project" value="MGI"/>
</dbReference>
<dbReference type="GO" id="GO:0035655">
    <property type="term" value="P:interleukin-18-mediated signaling pathway"/>
    <property type="evidence" value="ECO:0000314"/>
    <property type="project" value="UniProtKB"/>
</dbReference>
<dbReference type="GO" id="GO:0030101">
    <property type="term" value="P:natural killer cell activation"/>
    <property type="evidence" value="ECO:0000314"/>
    <property type="project" value="MGI"/>
</dbReference>
<dbReference type="GO" id="GO:0042267">
    <property type="term" value="P:natural killer cell mediated cytotoxicity"/>
    <property type="evidence" value="ECO:0000314"/>
    <property type="project" value="MGI"/>
</dbReference>
<dbReference type="GO" id="GO:0045662">
    <property type="term" value="P:negative regulation of myoblast differentiation"/>
    <property type="evidence" value="ECO:0000315"/>
    <property type="project" value="MGI"/>
</dbReference>
<dbReference type="GO" id="GO:0042119">
    <property type="term" value="P:neutrophil activation"/>
    <property type="evidence" value="ECO:0000314"/>
    <property type="project" value="MGI"/>
</dbReference>
<dbReference type="GO" id="GO:0042104">
    <property type="term" value="P:positive regulation of activated T cell proliferation"/>
    <property type="evidence" value="ECO:0000250"/>
    <property type="project" value="UniProtKB"/>
</dbReference>
<dbReference type="GO" id="GO:0120162">
    <property type="term" value="P:positive regulation of cold-induced thermogenesis"/>
    <property type="evidence" value="ECO:0000315"/>
    <property type="project" value="YuBioLab"/>
</dbReference>
<dbReference type="GO" id="GO:0010628">
    <property type="term" value="P:positive regulation of gene expression"/>
    <property type="evidence" value="ECO:0000314"/>
    <property type="project" value="MGI"/>
</dbReference>
<dbReference type="GO" id="GO:0032725">
    <property type="term" value="P:positive regulation of granulocyte macrophage colony-stimulating factor production"/>
    <property type="evidence" value="ECO:0007669"/>
    <property type="project" value="Ensembl"/>
</dbReference>
<dbReference type="GO" id="GO:0050729">
    <property type="term" value="P:positive regulation of inflammatory response"/>
    <property type="evidence" value="ECO:0000315"/>
    <property type="project" value="UniProtKB"/>
</dbReference>
<dbReference type="GO" id="GO:0032736">
    <property type="term" value="P:positive regulation of interleukin-13 production"/>
    <property type="evidence" value="ECO:0000304"/>
    <property type="project" value="UniProtKB"/>
</dbReference>
<dbReference type="GO" id="GO:0032740">
    <property type="term" value="P:positive regulation of interleukin-17 production"/>
    <property type="evidence" value="ECO:0007669"/>
    <property type="project" value="Ensembl"/>
</dbReference>
<dbReference type="GO" id="GO:0010744">
    <property type="term" value="P:positive regulation of macrophage derived foam cell differentiation"/>
    <property type="evidence" value="ECO:0000315"/>
    <property type="project" value="BHF-UCL"/>
</dbReference>
<dbReference type="GO" id="GO:0032819">
    <property type="term" value="P:positive regulation of natural killer cell proliferation"/>
    <property type="evidence" value="ECO:0007669"/>
    <property type="project" value="Ensembl"/>
</dbReference>
<dbReference type="GO" id="GO:0051092">
    <property type="term" value="P:positive regulation of NF-kappaB transcription factor activity"/>
    <property type="evidence" value="ECO:0000250"/>
    <property type="project" value="UniProtKB"/>
</dbReference>
<dbReference type="GO" id="GO:0051142">
    <property type="term" value="P:positive regulation of NK T cell proliferation"/>
    <property type="evidence" value="ECO:0007669"/>
    <property type="project" value="Ensembl"/>
</dbReference>
<dbReference type="GO" id="GO:1901224">
    <property type="term" value="P:positive regulation of non-canonical NF-kappaB signal transduction"/>
    <property type="evidence" value="ECO:0000314"/>
    <property type="project" value="MGI"/>
</dbReference>
<dbReference type="GO" id="GO:0051897">
    <property type="term" value="P:positive regulation of phosphatidylinositol 3-kinase/protein kinase B signal transduction"/>
    <property type="evidence" value="ECO:0007669"/>
    <property type="project" value="Ensembl"/>
</dbReference>
<dbReference type="GO" id="GO:0048661">
    <property type="term" value="P:positive regulation of smooth muscle cell proliferation"/>
    <property type="evidence" value="ECO:0007669"/>
    <property type="project" value="Ensembl"/>
</dbReference>
<dbReference type="GO" id="GO:2000556">
    <property type="term" value="P:positive regulation of T-helper 1 cell cytokine production"/>
    <property type="evidence" value="ECO:0000250"/>
    <property type="project" value="UniProtKB"/>
</dbReference>
<dbReference type="GO" id="GO:0045630">
    <property type="term" value="P:positive regulation of T-helper 2 cell differentiation"/>
    <property type="evidence" value="ECO:0000315"/>
    <property type="project" value="BHF-UCL"/>
</dbReference>
<dbReference type="GO" id="GO:0045944">
    <property type="term" value="P:positive regulation of transcription by RNA polymerase II"/>
    <property type="evidence" value="ECO:0007669"/>
    <property type="project" value="Ensembl"/>
</dbReference>
<dbReference type="GO" id="GO:0032729">
    <property type="term" value="P:positive regulation of type II interferon production"/>
    <property type="evidence" value="ECO:0000314"/>
    <property type="project" value="MGI"/>
</dbReference>
<dbReference type="GO" id="GO:0030155">
    <property type="term" value="P:regulation of cell adhesion"/>
    <property type="evidence" value="ECO:0000250"/>
    <property type="project" value="UniProtKB"/>
</dbReference>
<dbReference type="GO" id="GO:0030431">
    <property type="term" value="P:sleep"/>
    <property type="evidence" value="ECO:0000250"/>
    <property type="project" value="UniProtKB"/>
</dbReference>
<dbReference type="GO" id="GO:0042088">
    <property type="term" value="P:T-helper 1 type immune response"/>
    <property type="evidence" value="ECO:0000250"/>
    <property type="project" value="UniProtKB"/>
</dbReference>
<dbReference type="GO" id="GO:0070328">
    <property type="term" value="P:triglyceride homeostasis"/>
    <property type="evidence" value="ECO:0000315"/>
    <property type="project" value="BHF-UCL"/>
</dbReference>
<dbReference type="CDD" id="cd23298">
    <property type="entry name" value="beta-trefoil_IL18"/>
    <property type="match status" value="1"/>
</dbReference>
<dbReference type="Gene3D" id="2.80.10.50">
    <property type="match status" value="1"/>
</dbReference>
<dbReference type="InterPro" id="IPR015529">
    <property type="entry name" value="IL-18"/>
</dbReference>
<dbReference type="InterPro" id="IPR000975">
    <property type="entry name" value="IL-1_fam"/>
</dbReference>
<dbReference type="InterPro" id="IPR008996">
    <property type="entry name" value="IL1/FGF"/>
</dbReference>
<dbReference type="PANTHER" id="PTHR10078">
    <property type="entry name" value="INTERLEUKIN-1 FAMILY MEMBER"/>
    <property type="match status" value="1"/>
</dbReference>
<dbReference type="PANTHER" id="PTHR10078:SF35">
    <property type="entry name" value="INTERLEUKIN-18"/>
    <property type="match status" value="1"/>
</dbReference>
<dbReference type="Pfam" id="PF00340">
    <property type="entry name" value="IL1"/>
    <property type="match status" value="1"/>
</dbReference>
<dbReference type="PIRSF" id="PIRSF015162">
    <property type="entry name" value="Interleukin_18"/>
    <property type="match status" value="1"/>
</dbReference>
<dbReference type="PRINTS" id="PR01933">
    <property type="entry name" value="INTRLEUKIN18"/>
</dbReference>
<dbReference type="SUPFAM" id="SSF50353">
    <property type="entry name" value="Cytokine"/>
    <property type="match status" value="1"/>
</dbReference>
<accession>P70380</accession>
<protein>
    <recommendedName>
        <fullName>Interleukin-18</fullName>
        <shortName>IL-18</shortName>
    </recommendedName>
    <alternativeName>
        <fullName>Interferon gamma-inducing factor</fullName>
        <shortName>IFN-gamma-inducing factor</shortName>
    </alternativeName>
    <alternativeName>
        <fullName>Interleukin-1 gamma</fullName>
        <shortName>IL-1 gamma</shortName>
    </alternativeName>
</protein>
<organism>
    <name type="scientific">Mus musculus</name>
    <name type="common">Mouse</name>
    <dbReference type="NCBI Taxonomy" id="10090"/>
    <lineage>
        <taxon>Eukaryota</taxon>
        <taxon>Metazoa</taxon>
        <taxon>Chordata</taxon>
        <taxon>Craniata</taxon>
        <taxon>Vertebrata</taxon>
        <taxon>Euteleostomi</taxon>
        <taxon>Mammalia</taxon>
        <taxon>Eutheria</taxon>
        <taxon>Euarchontoglires</taxon>
        <taxon>Glires</taxon>
        <taxon>Rodentia</taxon>
        <taxon>Myomorpha</taxon>
        <taxon>Muroidea</taxon>
        <taxon>Muridae</taxon>
        <taxon>Murinae</taxon>
        <taxon>Mus</taxon>
        <taxon>Mus</taxon>
    </lineage>
</organism>
<proteinExistence type="evidence at protein level"/>
<name>IL18_MOUSE</name>
<keyword id="KW-0202">Cytokine</keyword>
<keyword id="KW-0963">Cytoplasm</keyword>
<keyword id="KW-0903">Direct protein sequencing</keyword>
<keyword id="KW-0395">Inflammatory response</keyword>
<keyword id="KW-1185">Reference proteome</keyword>
<keyword id="KW-0964">Secreted</keyword>
<evidence type="ECO:0000250" key="1">
    <source>
        <dbReference type="UniProtKB" id="Q14116"/>
    </source>
</evidence>
<evidence type="ECO:0000269" key="2">
    <source>
    </source>
</evidence>
<evidence type="ECO:0000269" key="3">
    <source>
    </source>
</evidence>
<evidence type="ECO:0000269" key="4">
    <source>
    </source>
</evidence>
<evidence type="ECO:0000269" key="5">
    <source>
    </source>
</evidence>
<evidence type="ECO:0000269" key="6">
    <source>
    </source>
</evidence>
<evidence type="ECO:0000269" key="7">
    <source>
    </source>
</evidence>
<evidence type="ECO:0000305" key="8"/>
<evidence type="ECO:0000312" key="9">
    <source>
        <dbReference type="MGI" id="MGI:107936"/>
    </source>
</evidence>
<comment type="function">
    <text evidence="1 2 3 4">Pro-inflammatory cytokine primarily involved in epithelial barrier repair, polarized T-helper 1 (Th1) cell and natural killer (NK) cell immune responses (PubMed:26638072, PubMed:26638073). Upon binding to IL18R1 and IL18RAP, forms a signaling ternary complex which activates NF-kappa-B, triggering synthesis of inflammatory mediators (By similarity). Synergizes with IL12/interleukin-12 to induce IFNG synthesis from T-helper 1 (Th1) cells and natural killer (NK) cells (By similarity). Involved in transduction of inflammation downstream of pyroptosis: its mature form is specifically released in the extracellular milieu by passing through the gasdermin-D (GSDMD) pore (PubMed:30392956).</text>
</comment>
<comment type="subunit">
    <text evidence="1">Forms a ternary complex with ligand-binding receptor subunit IL18R1 and signaling receptor subunit IL18RAP at the plasma membrane. Mature IL18 first binds to IL18R1 forming a low affinity binary complex, which then interacts with IL18RAP to form a high affinity ternary complex that signals inside the cell. Interacts with cargo receptor TMED10; the interaction mediates the translocation from the cytoplasm into the ERGIC (endoplasmic reticulum-Golgi intermediate compartment) and thereby secretion.</text>
</comment>
<comment type="subcellular location">
    <subcellularLocation>
        <location evidence="1">Cytoplasm</location>
    </subcellularLocation>
    <subcellularLocation>
        <location evidence="4">Secreted</location>
    </subcellularLocation>
    <text evidence="1 4">The precursor is cytosolic (By similarity). In response to inflammasome-activating signals, cleaved and secreted (By similarity). Mature form is secreted and released in the extracellular milieu by passing through the gasdermin-D (GSDMD) pore (PubMed:30392956). In contrast, the precursor form is not released, due to the presence of an acidic region that is proteolytically removed by CASP1 during maturation (By similarity). The secretion is dependent on protein unfolding and facilitated by the cargo receptor TMED10 (By similarity).</text>
</comment>
<comment type="PTM">
    <text evidence="1 5 6">The pro-IL-18 precursor is processed by CASP1 to yield its mature, active form (PubMed:37993712, PubMed:37993714). The pro-IL-18 precursor is however not processed by Casp4/Casp11 in rodents (PubMed:37993712, PubMed:37993714). The pro-IL-18 precursor features autoinhibitory interactions between the propeptide and the post-cleavage-site region, preventing recognition by the IL18R1 receptor (By similarity). Processing by CASP1 induces conformational changes to generate critical receptor-binding sites (By similarity). The mature form is then secreted and released in the extracellular milieu by passing through the gasdermin-D (GSDMD) pore (By similarity). In contrast, cleavage by CASP3 inactivates IL18 (By similarity).</text>
</comment>
<comment type="similarity">
    <text evidence="8">Belongs to the IL-1 family.</text>
</comment>
<reference key="1">
    <citation type="journal article" date="1995" name="Nature">
        <title>Cloning of a new cytokine that induces IFN-gamma production by T cells.</title>
        <authorList>
            <person name="Okamura H."/>
            <person name="Tsutui H."/>
            <person name="Komatsu T."/>
            <person name="Yutsudo M."/>
            <person name="Hakura A."/>
            <person name="Tanimoto T."/>
            <person name="Torigoe K."/>
            <person name="Okura T."/>
            <person name="Nukada Y."/>
            <person name="Hattori K."/>
            <person name="Akita K."/>
            <person name="Namba M."/>
            <person name="Tanabe F."/>
            <person name="Konishi K."/>
            <person name="Fukuda S."/>
            <person name="Kurimoto M."/>
        </authorList>
    </citation>
    <scope>NUCLEOTIDE SEQUENCE [MRNA]</scope>
    <scope>PARTIAL PROTEIN SEQUENCE</scope>
    <source>
        <tissue>Liver</tissue>
    </source>
</reference>
<reference key="2">
    <citation type="journal article" date="2004" name="Genome Res.">
        <title>The status, quality, and expansion of the NIH full-length cDNA project: the Mammalian Gene Collection (MGC).</title>
        <authorList>
            <consortium name="The MGC Project Team"/>
        </authorList>
    </citation>
    <scope>NUCLEOTIDE SEQUENCE [LARGE SCALE MRNA]</scope>
    <source>
        <strain>FVB/N</strain>
        <tissue>Colon</tissue>
    </source>
</reference>
<reference key="3">
    <citation type="journal article" date="1997" name="J. Clin. Invest.">
        <title>Active stage of autoimmune diabetes is associated with the expression of a novel cytokine, IGIF, which is located near Idd2.</title>
        <authorList>
            <person name="Rothe H."/>
            <person name="Jenkins N.A."/>
            <person name="Copeland N.G."/>
            <person name="Kolb H."/>
        </authorList>
    </citation>
    <scope>NUCLEOTIDE SEQUENCE [MRNA] OF 1-191</scope>
    <source>
        <strain>NOD</strain>
        <tissue>Pancreas</tissue>
    </source>
</reference>
<reference key="4">
    <citation type="journal article" date="2010" name="Cell">
        <title>A tissue-specific atlas of mouse protein phosphorylation and expression.</title>
        <authorList>
            <person name="Huttlin E.L."/>
            <person name="Jedrychowski M.P."/>
            <person name="Elias J.E."/>
            <person name="Goswami T."/>
            <person name="Rad R."/>
            <person name="Beausoleil S.A."/>
            <person name="Villen J."/>
            <person name="Haas W."/>
            <person name="Sowa M.E."/>
            <person name="Gygi S.P."/>
        </authorList>
    </citation>
    <scope>IDENTIFICATION BY MASS SPECTROMETRY [LARGE SCALE ANALYSIS]</scope>
    <source>
        <tissue>Brain</tissue>
        <tissue>Spleen</tissue>
    </source>
</reference>
<reference key="5">
    <citation type="journal article" date="2015" name="Cell">
        <title>Microbiota-modulated metabolites shape the intestinal microenvironment by regulating NLRP6 inflammasome signaling.</title>
        <authorList>
            <person name="Levy M."/>
            <person name="Thaiss C.A."/>
            <person name="Zeevi D."/>
            <person name="Dohnalova L."/>
            <person name="Zilberman-Schapira G."/>
            <person name="Mahdi J.A."/>
            <person name="David E."/>
            <person name="Savidor A."/>
            <person name="Korem T."/>
            <person name="Herzig Y."/>
            <person name="Pevsner-Fischer M."/>
            <person name="Shapiro H."/>
            <person name="Christ A."/>
            <person name="Harmelin A."/>
            <person name="Halpern Z."/>
            <person name="Latz E."/>
            <person name="Flavell R.A."/>
            <person name="Amit I."/>
            <person name="Segal E."/>
            <person name="Elinav E."/>
        </authorList>
    </citation>
    <scope>FUNCTION</scope>
</reference>
<reference key="6">
    <citation type="journal article" date="2015" name="Cell">
        <title>Epithelial IL-18 equilibrium controls barrier function in colitis.</title>
        <authorList>
            <person name="Nowarski R."/>
            <person name="Jackson R."/>
            <person name="Gagliani N."/>
            <person name="de Zoete M.R."/>
            <person name="Palm N.W."/>
            <person name="Bailis W."/>
            <person name="Low J.S."/>
            <person name="Harman C.C."/>
            <person name="Graham M."/>
            <person name="Elinav E."/>
            <person name="Flavell R.A."/>
        </authorList>
    </citation>
    <scope>FUNCTION</scope>
</reference>
<reference key="7">
    <citation type="journal article" date="2018" name="Cell">
        <title>The NLRP6 inflammasome recognizes lipoteichoic acid and regulates Gram-positive pathogen infection.</title>
        <authorList>
            <person name="Hara H."/>
            <person name="Seregin S.S."/>
            <person name="Yang D."/>
            <person name="Fukase K."/>
            <person name="Chamaillard M."/>
            <person name="Alnemri E.S."/>
            <person name="Inohara N."/>
            <person name="Chen G.Y."/>
            <person name="Nunez G."/>
        </authorList>
    </citation>
    <scope>FUNCTION</scope>
    <scope>SUBCELLULAR LOCATION</scope>
</reference>
<reference key="8">
    <citation type="journal article" date="2023" name="Nature">
        <title>Structural insights into cytokine cleavage by inflammatory caspase-4.</title>
        <authorList>
            <person name="Devant P."/>
            <person name="Dong Y."/>
            <person name="Mintseris J."/>
            <person name="Ma W."/>
            <person name="Gygi S.P."/>
            <person name="Wu H."/>
            <person name="Kagan J.C."/>
        </authorList>
    </citation>
    <scope>PROTEOLYTIC CLEAVAGE</scope>
    <scope>MUTAGENESIS OF 28-GLU--ASP-31 AND 36-ASN--HIS-41</scope>
</reference>
<reference key="9">
    <citation type="journal article" date="2023" name="Nature">
        <title>Recognition and maturation of IL-18 by caspase-4 noncanonical inflammasome.</title>
        <authorList>
            <person name="Shi X."/>
            <person name="Sun Q."/>
            <person name="Hou Y."/>
            <person name="Zeng H."/>
            <person name="Cao Y."/>
            <person name="Dong M."/>
            <person name="Ding J."/>
            <person name="Shao F."/>
        </authorList>
    </citation>
    <scope>PROTEOLYTIC CLEAVAGE</scope>
</reference>